<sequence>MTPLLCLHHLLQQVSVTKIQTTKMQRSSPLNRLQLPMVASQSQSLSLSPMSPLPSTLQSPQIRLHNTLLSPVHLLLPLPLQVTYNGTTPLRLLIRPVGEL</sequence>
<gene>
    <name type="ordered locus">YOR248W</name>
    <name type="ORF">O5276</name>
</gene>
<comment type="miscellaneous">
    <text evidence="1">Overlaps SRL1.</text>
</comment>
<comment type="caution">
    <text evidence="2">Product of a dubious gene prediction unlikely to encode a functional protein. Because of that it is not part of the S.cerevisiae S288c complete/reference proteome set.</text>
</comment>
<reference key="1">
    <citation type="journal article" date="1997" name="Yeast">
        <title>Sequencing analysis of a 36.8 kb fragment of yeast chromosome XV reveals 26 open reading frames including SEC63, CDC31, SUG2, GCD1, RBL2, PNT1, PAC1 and VPH1.</title>
        <authorList>
            <person name="Poirey R."/>
            <person name="Jauniaux J.-C."/>
        </authorList>
    </citation>
    <scope>NUCLEOTIDE SEQUENCE [GENOMIC DNA]</scope>
</reference>
<reference key="2">
    <citation type="journal article" date="1997" name="Nature">
        <title>The nucleotide sequence of Saccharomyces cerevisiae chromosome XV.</title>
        <authorList>
            <person name="Dujon B."/>
            <person name="Albermann K."/>
            <person name="Aldea M."/>
            <person name="Alexandraki D."/>
            <person name="Ansorge W."/>
            <person name="Arino J."/>
            <person name="Benes V."/>
            <person name="Bohn C."/>
            <person name="Bolotin-Fukuhara M."/>
            <person name="Bordonne R."/>
            <person name="Boyer J."/>
            <person name="Camasses A."/>
            <person name="Casamayor A."/>
            <person name="Casas C."/>
            <person name="Cheret G."/>
            <person name="Cziepluch C."/>
            <person name="Daignan-Fornier B."/>
            <person name="Dang V.-D."/>
            <person name="de Haan M."/>
            <person name="Delius H."/>
            <person name="Durand P."/>
            <person name="Fairhead C."/>
            <person name="Feldmann H."/>
            <person name="Gaillon L."/>
            <person name="Galisson F."/>
            <person name="Gamo F.-J."/>
            <person name="Gancedo C."/>
            <person name="Goffeau A."/>
            <person name="Goulding S.E."/>
            <person name="Grivell L.A."/>
            <person name="Habbig B."/>
            <person name="Hand N.J."/>
            <person name="Hani J."/>
            <person name="Hattenhorst U."/>
            <person name="Hebling U."/>
            <person name="Hernando Y."/>
            <person name="Herrero E."/>
            <person name="Heumann K."/>
            <person name="Hiesel R."/>
            <person name="Hilger F."/>
            <person name="Hofmann B."/>
            <person name="Hollenberg C.P."/>
            <person name="Hughes B."/>
            <person name="Jauniaux J.-C."/>
            <person name="Kalogeropoulos A."/>
            <person name="Katsoulou C."/>
            <person name="Kordes E."/>
            <person name="Lafuente M.J."/>
            <person name="Landt O."/>
            <person name="Louis E.J."/>
            <person name="Maarse A.C."/>
            <person name="Madania A."/>
            <person name="Mannhaupt G."/>
            <person name="Marck C."/>
            <person name="Martin R.P."/>
            <person name="Mewes H.-W."/>
            <person name="Michaux G."/>
            <person name="Paces V."/>
            <person name="Parle-McDermott A.G."/>
            <person name="Pearson B.M."/>
            <person name="Perrin A."/>
            <person name="Pettersson B."/>
            <person name="Poch O."/>
            <person name="Pohl T.M."/>
            <person name="Poirey R."/>
            <person name="Portetelle D."/>
            <person name="Pujol A."/>
            <person name="Purnelle B."/>
            <person name="Ramezani Rad M."/>
            <person name="Rechmann S."/>
            <person name="Schwager C."/>
            <person name="Schweizer M."/>
            <person name="Sor F."/>
            <person name="Sterky F."/>
            <person name="Tarassov I.A."/>
            <person name="Teodoru C."/>
            <person name="Tettelin H."/>
            <person name="Thierry A."/>
            <person name="Tobiasch E."/>
            <person name="Tzermia M."/>
            <person name="Uhlen M."/>
            <person name="Unseld M."/>
            <person name="Valens M."/>
            <person name="Vandenbol M."/>
            <person name="Vetter I."/>
            <person name="Vlcek C."/>
            <person name="Voet M."/>
            <person name="Volckaert G."/>
            <person name="Voss H."/>
            <person name="Wambutt R."/>
            <person name="Wedler H."/>
            <person name="Wiemann S."/>
            <person name="Winsor B."/>
            <person name="Wolfe K.H."/>
            <person name="Zollner A."/>
            <person name="Zumstein E."/>
            <person name="Kleine K."/>
        </authorList>
    </citation>
    <scope>NUCLEOTIDE SEQUENCE [LARGE SCALE GENOMIC DNA]</scope>
    <source>
        <strain>ATCC 204508 / S288c</strain>
    </source>
</reference>
<reference key="3">
    <citation type="journal article" date="2014" name="G3 (Bethesda)">
        <title>The reference genome sequence of Saccharomyces cerevisiae: Then and now.</title>
        <authorList>
            <person name="Engel S.R."/>
            <person name="Dietrich F.S."/>
            <person name="Fisk D.G."/>
            <person name="Binkley G."/>
            <person name="Balakrishnan R."/>
            <person name="Costanzo M.C."/>
            <person name="Dwight S.S."/>
            <person name="Hitz B.C."/>
            <person name="Karra K."/>
            <person name="Nash R.S."/>
            <person name="Weng S."/>
            <person name="Wong E.D."/>
            <person name="Lloyd P."/>
            <person name="Skrzypek M.S."/>
            <person name="Miyasato S.R."/>
            <person name="Simison M."/>
            <person name="Cherry J.M."/>
        </authorList>
    </citation>
    <scope>GENOME REANNOTATION</scope>
    <source>
        <strain>ATCC 204508 / S288c</strain>
    </source>
</reference>
<protein>
    <recommendedName>
        <fullName>Putative uncharacterized protein YOR248W</fullName>
    </recommendedName>
</protein>
<proteinExistence type="uncertain"/>
<feature type="chain" id="PRO_0000299729" description="Putative uncharacterized protein YOR248W">
    <location>
        <begin position="1"/>
        <end position="100"/>
    </location>
</feature>
<dbReference type="EMBL" id="Z75155">
    <property type="protein sequence ID" value="CAA99469.1"/>
    <property type="molecule type" value="Genomic_DNA"/>
</dbReference>
<dbReference type="PIR" id="S67141">
    <property type="entry name" value="S67141"/>
</dbReference>
<dbReference type="STRING" id="4932.YOR248W"/>
<dbReference type="PaxDb" id="4932-YOR248W"/>
<dbReference type="TopDownProteomics" id="Q08681"/>
<dbReference type="EnsemblFungi" id="YOR248W_mRNA">
    <property type="protein sequence ID" value="YOR248W"/>
    <property type="gene ID" value="YOR248W"/>
</dbReference>
<dbReference type="AGR" id="SGD:S000005774"/>
<dbReference type="SGD" id="S000005774">
    <property type="gene designation" value="YOR248W"/>
</dbReference>
<dbReference type="HOGENOM" id="CLU_2308252_0_0_1"/>
<organism>
    <name type="scientific">Saccharomyces cerevisiae (strain ATCC 204508 / S288c)</name>
    <name type="common">Baker's yeast</name>
    <dbReference type="NCBI Taxonomy" id="559292"/>
    <lineage>
        <taxon>Eukaryota</taxon>
        <taxon>Fungi</taxon>
        <taxon>Dikarya</taxon>
        <taxon>Ascomycota</taxon>
        <taxon>Saccharomycotina</taxon>
        <taxon>Saccharomycetes</taxon>
        <taxon>Saccharomycetales</taxon>
        <taxon>Saccharomycetaceae</taxon>
        <taxon>Saccharomyces</taxon>
    </lineage>
</organism>
<accession>Q08681</accession>
<name>YO248_YEAST</name>
<evidence type="ECO:0000305" key="1"/>
<evidence type="ECO:0000305" key="2">
    <source>
    </source>
</evidence>